<proteinExistence type="evidence at protein level"/>
<keyword id="KW-0963">Cytoplasm</keyword>
<keyword id="KW-0520">NAD</keyword>
<keyword id="KW-0560">Oxidoreductase</keyword>
<keyword id="KW-0597">Phosphoprotein</keyword>
<keyword id="KW-0346">Stress response</keyword>
<dbReference type="EC" id="1.1.1.27" evidence="1"/>
<dbReference type="EMBL" id="CP000046">
    <property type="protein sequence ID" value="AAW38617.1"/>
    <property type="molecule type" value="Genomic_DNA"/>
</dbReference>
<dbReference type="RefSeq" id="WP_000846637.1">
    <property type="nucleotide sequence ID" value="NZ_JBGOFO010000001.1"/>
</dbReference>
<dbReference type="SMR" id="Q5HCV0"/>
<dbReference type="KEGG" id="sac:SACOL2618"/>
<dbReference type="HOGENOM" id="CLU_045401_1_1_9"/>
<dbReference type="UniPathway" id="UPA00554">
    <property type="reaction ID" value="UER00611"/>
</dbReference>
<dbReference type="Proteomes" id="UP000000530">
    <property type="component" value="Chromosome"/>
</dbReference>
<dbReference type="GO" id="GO:0005737">
    <property type="term" value="C:cytoplasm"/>
    <property type="evidence" value="ECO:0007669"/>
    <property type="project" value="UniProtKB-SubCell"/>
</dbReference>
<dbReference type="GO" id="GO:0004459">
    <property type="term" value="F:L-lactate dehydrogenase activity"/>
    <property type="evidence" value="ECO:0007669"/>
    <property type="project" value="UniProtKB-UniRule"/>
</dbReference>
<dbReference type="GO" id="GO:0006096">
    <property type="term" value="P:glycolytic process"/>
    <property type="evidence" value="ECO:0007669"/>
    <property type="project" value="UniProtKB-UniRule"/>
</dbReference>
<dbReference type="GO" id="GO:0006089">
    <property type="term" value="P:lactate metabolic process"/>
    <property type="evidence" value="ECO:0007669"/>
    <property type="project" value="TreeGrafter"/>
</dbReference>
<dbReference type="CDD" id="cd05291">
    <property type="entry name" value="HicDH_like"/>
    <property type="match status" value="1"/>
</dbReference>
<dbReference type="FunFam" id="3.40.50.720:FF:000018">
    <property type="entry name" value="Malate dehydrogenase"/>
    <property type="match status" value="1"/>
</dbReference>
<dbReference type="Gene3D" id="3.90.110.10">
    <property type="entry name" value="Lactate dehydrogenase/glycoside hydrolase, family 4, C-terminal"/>
    <property type="match status" value="1"/>
</dbReference>
<dbReference type="Gene3D" id="3.40.50.720">
    <property type="entry name" value="NAD(P)-binding Rossmann-like Domain"/>
    <property type="match status" value="1"/>
</dbReference>
<dbReference type="HAMAP" id="MF_00488">
    <property type="entry name" value="Lactate_dehydrog"/>
    <property type="match status" value="1"/>
</dbReference>
<dbReference type="InterPro" id="IPR001557">
    <property type="entry name" value="L-lactate/malate_DH"/>
</dbReference>
<dbReference type="InterPro" id="IPR011304">
    <property type="entry name" value="L-lactate_DH"/>
</dbReference>
<dbReference type="InterPro" id="IPR018177">
    <property type="entry name" value="L-lactate_DH_AS"/>
</dbReference>
<dbReference type="InterPro" id="IPR022383">
    <property type="entry name" value="Lactate/malate_DH_C"/>
</dbReference>
<dbReference type="InterPro" id="IPR001236">
    <property type="entry name" value="Lactate/malate_DH_N"/>
</dbReference>
<dbReference type="InterPro" id="IPR015955">
    <property type="entry name" value="Lactate_DH/Glyco_Ohase_4_C"/>
</dbReference>
<dbReference type="InterPro" id="IPR036291">
    <property type="entry name" value="NAD(P)-bd_dom_sf"/>
</dbReference>
<dbReference type="NCBIfam" id="TIGR01771">
    <property type="entry name" value="L-LDH-NAD"/>
    <property type="match status" value="1"/>
</dbReference>
<dbReference type="NCBIfam" id="NF000824">
    <property type="entry name" value="PRK00066.1"/>
    <property type="match status" value="1"/>
</dbReference>
<dbReference type="PANTHER" id="PTHR43128">
    <property type="entry name" value="L-2-HYDROXYCARBOXYLATE DEHYDROGENASE (NAD(P)(+))"/>
    <property type="match status" value="1"/>
</dbReference>
<dbReference type="PANTHER" id="PTHR43128:SF16">
    <property type="entry name" value="L-LACTATE DEHYDROGENASE"/>
    <property type="match status" value="1"/>
</dbReference>
<dbReference type="Pfam" id="PF02866">
    <property type="entry name" value="Ldh_1_C"/>
    <property type="match status" value="1"/>
</dbReference>
<dbReference type="Pfam" id="PF00056">
    <property type="entry name" value="Ldh_1_N"/>
    <property type="match status" value="1"/>
</dbReference>
<dbReference type="PIRSF" id="PIRSF000102">
    <property type="entry name" value="Lac_mal_DH"/>
    <property type="match status" value="1"/>
</dbReference>
<dbReference type="PRINTS" id="PR00086">
    <property type="entry name" value="LLDHDRGNASE"/>
</dbReference>
<dbReference type="SUPFAM" id="SSF56327">
    <property type="entry name" value="LDH C-terminal domain-like"/>
    <property type="match status" value="1"/>
</dbReference>
<dbReference type="SUPFAM" id="SSF51735">
    <property type="entry name" value="NAD(P)-binding Rossmann-fold domains"/>
    <property type="match status" value="1"/>
</dbReference>
<dbReference type="PROSITE" id="PS00064">
    <property type="entry name" value="L_LDH"/>
    <property type="match status" value="1"/>
</dbReference>
<sequence>MKTFGKKVVLIGDGSVGSSYAFAMVTQGVADEFVIIDIAKDKVKADVQDLNHGTVHSPSPVDVKAGEYEDCKDADLVVITAGAPQKPGETRLQLVEKNTKIMKSIVKSVMDSGFDGYFLIAANPVDILTRFVKEYTGLPAERVIGSGTVLDSARLQYLISQELGVAPSSVDASIIGEHGDTELAVWSQANVAGISVYDTLKEQTGSEAKAEEIYVNTRDAAYEIIQAKGSTYYGIALALMRISKAILNNENNVLNVSIQLDGQYGGHKGVYLGVPTLVNQHGAVKIYEMPLSAEEQALFDKSVKTLEDTFDSIKYLLED</sequence>
<evidence type="ECO:0000255" key="1">
    <source>
        <dbReference type="HAMAP-Rule" id="MF_00488"/>
    </source>
</evidence>
<evidence type="ECO:0000269" key="2">
    <source>
    </source>
</evidence>
<evidence type="ECO:0000305" key="3"/>
<feature type="chain" id="PRO_0000168380" description="L-lactate dehydrogenase 2">
    <location>
        <begin position="1"/>
        <end position="319"/>
    </location>
</feature>
<feature type="active site" description="Proton acceptor" evidence="1">
    <location>
        <position position="178"/>
    </location>
</feature>
<feature type="binding site" evidence="1">
    <location>
        <position position="16"/>
    </location>
    <ligand>
        <name>NAD(+)</name>
        <dbReference type="ChEBI" id="CHEBI:57540"/>
    </ligand>
</feature>
<feature type="binding site" evidence="1">
    <location>
        <position position="37"/>
    </location>
    <ligand>
        <name>NAD(+)</name>
        <dbReference type="ChEBI" id="CHEBI:57540"/>
    </ligand>
</feature>
<feature type="binding site" evidence="1">
    <location>
        <position position="42"/>
    </location>
    <ligand>
        <name>NAD(+)</name>
        <dbReference type="ChEBI" id="CHEBI:57540"/>
    </ligand>
</feature>
<feature type="binding site" evidence="1">
    <location>
        <position position="68"/>
    </location>
    <ligand>
        <name>NAD(+)</name>
        <dbReference type="ChEBI" id="CHEBI:57540"/>
    </ligand>
</feature>
<feature type="binding site" evidence="1">
    <location>
        <begin position="82"/>
        <end position="83"/>
    </location>
    <ligand>
        <name>NAD(+)</name>
        <dbReference type="ChEBI" id="CHEBI:57540"/>
    </ligand>
</feature>
<feature type="binding site" evidence="1">
    <location>
        <position position="85"/>
    </location>
    <ligand>
        <name>substrate</name>
    </ligand>
</feature>
<feature type="binding site" evidence="1">
    <location>
        <position position="91"/>
    </location>
    <ligand>
        <name>substrate</name>
    </ligand>
</feature>
<feature type="binding site" evidence="1">
    <location>
        <position position="104"/>
    </location>
    <ligand>
        <name>NAD(+)</name>
        <dbReference type="ChEBI" id="CHEBI:57540"/>
    </ligand>
</feature>
<feature type="binding site" evidence="1">
    <location>
        <begin position="121"/>
        <end position="123"/>
    </location>
    <ligand>
        <name>NAD(+)</name>
        <dbReference type="ChEBI" id="CHEBI:57540"/>
    </ligand>
</feature>
<feature type="binding site" evidence="1">
    <location>
        <begin position="123"/>
        <end position="126"/>
    </location>
    <ligand>
        <name>substrate</name>
    </ligand>
</feature>
<feature type="binding site" evidence="1">
    <location>
        <position position="146"/>
    </location>
    <ligand>
        <name>NAD(+)</name>
        <dbReference type="ChEBI" id="CHEBI:57540"/>
    </ligand>
</feature>
<feature type="binding site" evidence="1">
    <location>
        <begin position="151"/>
        <end position="154"/>
    </location>
    <ligand>
        <name>substrate</name>
    </ligand>
</feature>
<feature type="binding site" evidence="1">
    <location>
        <position position="231"/>
    </location>
    <ligand>
        <name>substrate</name>
    </ligand>
</feature>
<feature type="modified residue" description="Phosphotyrosine" evidence="1">
    <location>
        <position position="222"/>
    </location>
</feature>
<gene>
    <name evidence="1" type="primary">ldh2</name>
    <name type="ordered locus">SACOL2618</name>
</gene>
<protein>
    <recommendedName>
        <fullName evidence="1">L-lactate dehydrogenase 2</fullName>
        <shortName evidence="1">L-LDH 2</shortName>
        <ecNumber evidence="1">1.1.1.27</ecNumber>
    </recommendedName>
</protein>
<organism>
    <name type="scientific">Staphylococcus aureus (strain COL)</name>
    <dbReference type="NCBI Taxonomy" id="93062"/>
    <lineage>
        <taxon>Bacteria</taxon>
        <taxon>Bacillati</taxon>
        <taxon>Bacillota</taxon>
        <taxon>Bacilli</taxon>
        <taxon>Bacillales</taxon>
        <taxon>Staphylococcaceae</taxon>
        <taxon>Staphylococcus</taxon>
    </lineage>
</organism>
<comment type="function">
    <text evidence="1 2">Catalyzes the conversion of lactate to pyruvate (Potential). Contributes to S.aureus growth during nitrosative stress in both aerobically and anaerobically cultured cells, despite playing a secondary role in this resistance mechanism (PubMed:18356528).</text>
</comment>
<comment type="catalytic activity">
    <reaction evidence="1">
        <text>(S)-lactate + NAD(+) = pyruvate + NADH + H(+)</text>
        <dbReference type="Rhea" id="RHEA:23444"/>
        <dbReference type="ChEBI" id="CHEBI:15361"/>
        <dbReference type="ChEBI" id="CHEBI:15378"/>
        <dbReference type="ChEBI" id="CHEBI:16651"/>
        <dbReference type="ChEBI" id="CHEBI:57540"/>
        <dbReference type="ChEBI" id="CHEBI:57945"/>
        <dbReference type="EC" id="1.1.1.27"/>
    </reaction>
</comment>
<comment type="pathway">
    <text evidence="1">Fermentation; pyruvate fermentation to lactate; (S)-lactate from pyruvate: step 1/1.</text>
</comment>
<comment type="subunit">
    <text evidence="1">Homotetramer.</text>
</comment>
<comment type="subcellular location">
    <subcellularLocation>
        <location evidence="1">Cytoplasm</location>
    </subcellularLocation>
</comment>
<comment type="induction">
    <text evidence="2">Constitutively expressed during aerobic growth. Modestly induced by anaerobiosis. Not induced during nitrosative stress.</text>
</comment>
<comment type="similarity">
    <text evidence="1 3">Belongs to the LDH/MDH superfamily. LDH family.</text>
</comment>
<name>LDH2_STAAC</name>
<reference key="1">
    <citation type="journal article" date="2005" name="J. Bacteriol.">
        <title>Insights on evolution of virulence and resistance from the complete genome analysis of an early methicillin-resistant Staphylococcus aureus strain and a biofilm-producing methicillin-resistant Staphylococcus epidermidis strain.</title>
        <authorList>
            <person name="Gill S.R."/>
            <person name="Fouts D.E."/>
            <person name="Archer G.L."/>
            <person name="Mongodin E.F."/>
            <person name="DeBoy R.T."/>
            <person name="Ravel J."/>
            <person name="Paulsen I.T."/>
            <person name="Kolonay J.F."/>
            <person name="Brinkac L.M."/>
            <person name="Beanan M.J."/>
            <person name="Dodson R.J."/>
            <person name="Daugherty S.C."/>
            <person name="Madupu R."/>
            <person name="Angiuoli S.V."/>
            <person name="Durkin A.S."/>
            <person name="Haft D.H."/>
            <person name="Vamathevan J.J."/>
            <person name="Khouri H."/>
            <person name="Utterback T.R."/>
            <person name="Lee C."/>
            <person name="Dimitrov G."/>
            <person name="Jiang L."/>
            <person name="Qin H."/>
            <person name="Weidman J."/>
            <person name="Tran K."/>
            <person name="Kang K.H."/>
            <person name="Hance I.R."/>
            <person name="Nelson K.E."/>
            <person name="Fraser C.M."/>
        </authorList>
    </citation>
    <scope>NUCLEOTIDE SEQUENCE [LARGE SCALE GENOMIC DNA]</scope>
    <source>
        <strain>COL</strain>
    </source>
</reference>
<reference key="2">
    <citation type="journal article" date="2008" name="Science">
        <title>A nitric oxide-inducible lactate dehydrogenase enables Staphylococcus aureus to resist innate immunity.</title>
        <authorList>
            <person name="Richardson A.R."/>
            <person name="Libby S.J."/>
            <person name="Fang F.C."/>
        </authorList>
    </citation>
    <scope>FUNCTION IN NITROSATIVE STRESS</scope>
    <scope>INDUCTION</scope>
</reference>
<accession>Q5HCV0</accession>